<protein>
    <recommendedName>
        <fullName evidence="1">TDP-N-acetylfucosamine:lipid II N-acetylfucosaminyltransferase</fullName>
        <ecNumber evidence="1">2.4.1.325</ecNumber>
    </recommendedName>
    <alternativeName>
        <fullName evidence="1">4-alpha-L-fucosyltransferase</fullName>
    </alternativeName>
    <alternativeName>
        <fullName evidence="1">TDP-Fuc4NAc:lipid II Fuc4NAc transferase</fullName>
        <shortName evidence="1">Fuc4NAc transferase</shortName>
    </alternativeName>
</protein>
<sequence>MITLTHVLGSDIPHHNLTVLRFFNDVLAKCLPVEQVRHFMVAAKETAPFSSFPQLDINTYSDKKALAEAVIARAQADRSARFFWHGQFNATLWLALLSGKIKPGQVYWHVWGADLYEDAKSLKFRLFYLLRRIAQGRVGHVFATRGDLIHYQQRHPRVPASLLYFPTRMDPALTAINIDKPLAGPMTILVGNSGDTTNRHIEALKAIHQQFGPDVRVIIPMGYPANNEAYIEQVRQAGLALFSQDNLRILTEQIPFDDYLNILRECDLGYFIFNRQQGIGTLCLLTQFGVPFVLSRKNPFWQDLAEQHIPVFFYGDTLDEPLIREAQRQLAGLDKQAIAFFNPNYIEGWKQALALAAGEHP</sequence>
<organism>
    <name type="scientific">Yersinia pseudotuberculosis serotype I (strain IP32953)</name>
    <dbReference type="NCBI Taxonomy" id="273123"/>
    <lineage>
        <taxon>Bacteria</taxon>
        <taxon>Pseudomonadati</taxon>
        <taxon>Pseudomonadota</taxon>
        <taxon>Gammaproteobacteria</taxon>
        <taxon>Enterobacterales</taxon>
        <taxon>Yersiniaceae</taxon>
        <taxon>Yersinia</taxon>
    </lineage>
</organism>
<dbReference type="EC" id="2.4.1.325" evidence="1"/>
<dbReference type="EMBL" id="BX936398">
    <property type="protein sequence ID" value="CAH19417.1"/>
    <property type="molecule type" value="Genomic_DNA"/>
</dbReference>
<dbReference type="RefSeq" id="WP_011191503.1">
    <property type="nucleotide sequence ID" value="NC_006155.1"/>
</dbReference>
<dbReference type="SMR" id="Q66G07"/>
<dbReference type="CAZy" id="GT56">
    <property type="family name" value="Glycosyltransferase Family 56"/>
</dbReference>
<dbReference type="GeneID" id="49787847"/>
<dbReference type="KEGG" id="ypo:BZ17_2412"/>
<dbReference type="KEGG" id="yps:YPTB0177"/>
<dbReference type="PATRIC" id="fig|273123.14.peg.2533"/>
<dbReference type="UniPathway" id="UPA00566"/>
<dbReference type="Proteomes" id="UP000001011">
    <property type="component" value="Chromosome"/>
</dbReference>
<dbReference type="GO" id="GO:0005886">
    <property type="term" value="C:plasma membrane"/>
    <property type="evidence" value="ECO:0007669"/>
    <property type="project" value="UniProtKB-SubCell"/>
</dbReference>
<dbReference type="GO" id="GO:0102031">
    <property type="term" value="F:4-acetamido-4,6-dideoxy-D-galactose transferase activity"/>
    <property type="evidence" value="ECO:0007669"/>
    <property type="project" value="UniProtKB-EC"/>
</dbReference>
<dbReference type="GO" id="GO:0008417">
    <property type="term" value="F:fucosyltransferase activity"/>
    <property type="evidence" value="ECO:0007669"/>
    <property type="project" value="InterPro"/>
</dbReference>
<dbReference type="GO" id="GO:0009246">
    <property type="term" value="P:enterobacterial common antigen biosynthetic process"/>
    <property type="evidence" value="ECO:0007669"/>
    <property type="project" value="UniProtKB-UniRule"/>
</dbReference>
<dbReference type="GO" id="GO:0036065">
    <property type="term" value="P:fucosylation"/>
    <property type="evidence" value="ECO:0007669"/>
    <property type="project" value="InterPro"/>
</dbReference>
<dbReference type="HAMAP" id="MF_01002">
    <property type="entry name" value="WecF_RffT"/>
    <property type="match status" value="1"/>
</dbReference>
<dbReference type="InterPro" id="IPR009993">
    <property type="entry name" value="WecF"/>
</dbReference>
<dbReference type="NCBIfam" id="NF002753">
    <property type="entry name" value="PRK02797.1-2"/>
    <property type="match status" value="1"/>
</dbReference>
<dbReference type="Pfam" id="PF07429">
    <property type="entry name" value="Glyco_transf_56"/>
    <property type="match status" value="1"/>
</dbReference>
<reference key="1">
    <citation type="journal article" date="2004" name="Proc. Natl. Acad. Sci. U.S.A.">
        <title>Insights into the evolution of Yersinia pestis through whole-genome comparison with Yersinia pseudotuberculosis.</title>
        <authorList>
            <person name="Chain P.S.G."/>
            <person name="Carniel E."/>
            <person name="Larimer F.W."/>
            <person name="Lamerdin J."/>
            <person name="Stoutland P.O."/>
            <person name="Regala W.M."/>
            <person name="Georgescu A.M."/>
            <person name="Vergez L.M."/>
            <person name="Land M.L."/>
            <person name="Motin V.L."/>
            <person name="Brubaker R.R."/>
            <person name="Fowler J."/>
            <person name="Hinnebusch J."/>
            <person name="Marceau M."/>
            <person name="Medigue C."/>
            <person name="Simonet M."/>
            <person name="Chenal-Francisque V."/>
            <person name="Souza B."/>
            <person name="Dacheux D."/>
            <person name="Elliott J.M."/>
            <person name="Derbise A."/>
            <person name="Hauser L.J."/>
            <person name="Garcia E."/>
        </authorList>
    </citation>
    <scope>NUCLEOTIDE SEQUENCE [LARGE SCALE GENOMIC DNA]</scope>
    <source>
        <strain>IP32953</strain>
    </source>
</reference>
<feature type="chain" id="PRO_0000216191" description="TDP-N-acetylfucosamine:lipid II N-acetylfucosaminyltransferase">
    <location>
        <begin position="1"/>
        <end position="361"/>
    </location>
</feature>
<keyword id="KW-0997">Cell inner membrane</keyword>
<keyword id="KW-1003">Cell membrane</keyword>
<keyword id="KW-0328">Glycosyltransferase</keyword>
<keyword id="KW-0472">Membrane</keyword>
<keyword id="KW-0808">Transferase</keyword>
<comment type="function">
    <text evidence="1">Catalyzes the synthesis of Und-PP-GlcNAc-ManNAcA-Fuc4NAc (Lipid III), the third lipid-linked intermediate involved in ECA synthesis.</text>
</comment>
<comment type="catalytic activity">
    <reaction evidence="1">
        <text>beta-D-ManNAcA-(1-&gt;4)-alpha-D-GlcNAc-di-trans,octa-cis-undecaprenyl diphosphate + dTDP-4-acetamido-4,6-dideoxy-alpha-D-galactose = alpha-D-FucNAc4-(1-&gt;4)-beta-D-ManNAcA-(1-&gt;4)-D-GlcNAc-undecaprenyl diphosphate + dTDP + H(+)</text>
        <dbReference type="Rhea" id="RHEA:28759"/>
        <dbReference type="ChEBI" id="CHEBI:15378"/>
        <dbReference type="ChEBI" id="CHEBI:58369"/>
        <dbReference type="ChEBI" id="CHEBI:61495"/>
        <dbReference type="ChEBI" id="CHEBI:61496"/>
        <dbReference type="ChEBI" id="CHEBI:68493"/>
        <dbReference type="EC" id="2.4.1.325"/>
    </reaction>
</comment>
<comment type="pathway">
    <text evidence="1">Bacterial outer membrane biogenesis; enterobacterial common antigen biosynthesis.</text>
</comment>
<comment type="subcellular location">
    <subcellularLocation>
        <location evidence="1">Cell inner membrane</location>
        <topology evidence="1">Peripheral membrane protein</topology>
    </subcellularLocation>
</comment>
<comment type="similarity">
    <text evidence="1">Belongs to the glycosyltransferase 56 family.</text>
</comment>
<evidence type="ECO:0000255" key="1">
    <source>
        <dbReference type="HAMAP-Rule" id="MF_01002"/>
    </source>
</evidence>
<gene>
    <name evidence="1" type="primary">wecF</name>
    <name evidence="1" type="synonym">rffT</name>
    <name type="ordered locus">YPTB0177</name>
</gene>
<accession>Q66G07</accession>
<proteinExistence type="inferred from homology"/>
<name>WECF_YERPS</name>